<proteinExistence type="inferred from homology"/>
<reference key="1">
    <citation type="journal article" date="2002" name="Nucleic Acids Res.">
        <title>Genome sequence of Shigella flexneri 2a: insights into pathogenicity through comparison with genomes of Escherichia coli K12 and O157.</title>
        <authorList>
            <person name="Jin Q."/>
            <person name="Yuan Z."/>
            <person name="Xu J."/>
            <person name="Wang Y."/>
            <person name="Shen Y."/>
            <person name="Lu W."/>
            <person name="Wang J."/>
            <person name="Liu H."/>
            <person name="Yang J."/>
            <person name="Yang F."/>
            <person name="Zhang X."/>
            <person name="Zhang J."/>
            <person name="Yang G."/>
            <person name="Wu H."/>
            <person name="Qu D."/>
            <person name="Dong J."/>
            <person name="Sun L."/>
            <person name="Xue Y."/>
            <person name="Zhao A."/>
            <person name="Gao Y."/>
            <person name="Zhu J."/>
            <person name="Kan B."/>
            <person name="Ding K."/>
            <person name="Chen S."/>
            <person name="Cheng H."/>
            <person name="Yao Z."/>
            <person name="He B."/>
            <person name="Chen R."/>
            <person name="Ma D."/>
            <person name="Qiang B."/>
            <person name="Wen Y."/>
            <person name="Hou Y."/>
            <person name="Yu J."/>
        </authorList>
    </citation>
    <scope>NUCLEOTIDE SEQUENCE [LARGE SCALE GENOMIC DNA]</scope>
    <source>
        <strain>301 / Serotype 2a</strain>
    </source>
</reference>
<reference key="2">
    <citation type="journal article" date="2003" name="Infect. Immun.">
        <title>Complete genome sequence and comparative genomics of Shigella flexneri serotype 2a strain 2457T.</title>
        <authorList>
            <person name="Wei J."/>
            <person name="Goldberg M.B."/>
            <person name="Burland V."/>
            <person name="Venkatesan M.M."/>
            <person name="Deng W."/>
            <person name="Fournier G."/>
            <person name="Mayhew G.F."/>
            <person name="Plunkett G. III"/>
            <person name="Rose D.J."/>
            <person name="Darling A."/>
            <person name="Mau B."/>
            <person name="Perna N.T."/>
            <person name="Payne S.M."/>
            <person name="Runyen-Janecky L.J."/>
            <person name="Zhou S."/>
            <person name="Schwartz D.C."/>
            <person name="Blattner F.R."/>
        </authorList>
    </citation>
    <scope>NUCLEOTIDE SEQUENCE [LARGE SCALE GENOMIC DNA]</scope>
    <source>
        <strain>ATCC 700930 / 2457T / Serotype 2a</strain>
    </source>
</reference>
<evidence type="ECO:0000250" key="1">
    <source>
        <dbReference type="UniProtKB" id="P61887"/>
    </source>
</evidence>
<evidence type="ECO:0000305" key="2"/>
<comment type="function">
    <text evidence="1">Catalyzes the formation of dTDP-glucose, from dTTP and glucose 1-phosphate, as well as its pyrophosphorolysis.</text>
</comment>
<comment type="catalytic activity">
    <reaction evidence="1">
        <text>dTTP + alpha-D-glucose 1-phosphate + H(+) = dTDP-alpha-D-glucose + diphosphate</text>
        <dbReference type="Rhea" id="RHEA:15225"/>
        <dbReference type="ChEBI" id="CHEBI:15378"/>
        <dbReference type="ChEBI" id="CHEBI:33019"/>
        <dbReference type="ChEBI" id="CHEBI:37568"/>
        <dbReference type="ChEBI" id="CHEBI:57477"/>
        <dbReference type="ChEBI" id="CHEBI:58601"/>
        <dbReference type="EC" id="2.7.7.24"/>
    </reaction>
</comment>
<comment type="cofactor">
    <cofactor evidence="1">
        <name>Mg(2+)</name>
        <dbReference type="ChEBI" id="CHEBI:18420"/>
    </cofactor>
    <text evidence="1">Binds 1 Mg(2+) ion per subunit.</text>
</comment>
<comment type="pathway">
    <text evidence="1">Nucleotide-sugar biosynthesis; dTDP-4-acetamido-4,6-dideoxygalactose biosynthesis.</text>
</comment>
<comment type="pathway">
    <text evidence="1">Bacterial outer membrane biogenesis; enterobacterial common antigen biosynthesis.</text>
</comment>
<comment type="subunit">
    <text evidence="1">Homotetramer.</text>
</comment>
<comment type="similarity">
    <text evidence="2">Belongs to the glucose-1-phosphate thymidylyltransferase family.</text>
</comment>
<accession>P61888</accession>
<accession>P27831</accession>
<accession>P76755</accession>
<protein>
    <recommendedName>
        <fullName evidence="1">Glucose-1-phosphate thymidylyltransferase 2</fullName>
        <ecNumber evidence="1">2.7.7.24</ecNumber>
    </recommendedName>
    <alternativeName>
        <fullName evidence="1">dTDP-glucose pyrophosphorylase 2</fullName>
    </alternativeName>
    <alternativeName>
        <fullName evidence="1">dTDP-glucose synthase 2</fullName>
    </alternativeName>
</protein>
<dbReference type="EC" id="2.7.7.24" evidence="1"/>
<dbReference type="EMBL" id="AE005674">
    <property type="protein sequence ID" value="AAN45300.1"/>
    <property type="molecule type" value="Genomic_DNA"/>
</dbReference>
<dbReference type="EMBL" id="AE014073">
    <property type="protein sequence ID" value="AAP18898.1"/>
    <property type="molecule type" value="Genomic_DNA"/>
</dbReference>
<dbReference type="RefSeq" id="NP_709593.1">
    <property type="nucleotide sequence ID" value="NC_004337.2"/>
</dbReference>
<dbReference type="SMR" id="P61888"/>
<dbReference type="STRING" id="198214.SF3863"/>
<dbReference type="DrugBank" id="DB02452">
    <property type="generic name" value="Thymidine 5'-triphosphate"/>
</dbReference>
<dbReference type="PaxDb" id="198214-SF3863"/>
<dbReference type="GeneID" id="1025982"/>
<dbReference type="KEGG" id="sfl:SF3863"/>
<dbReference type="KEGG" id="sfx:S3897"/>
<dbReference type="PATRIC" id="fig|198214.7.peg.4553"/>
<dbReference type="HOGENOM" id="CLU_029499_9_0_6"/>
<dbReference type="UniPathway" id="UPA00566"/>
<dbReference type="UniPathway" id="UPA00817"/>
<dbReference type="Proteomes" id="UP000001006">
    <property type="component" value="Chromosome"/>
</dbReference>
<dbReference type="Proteomes" id="UP000002673">
    <property type="component" value="Chromosome"/>
</dbReference>
<dbReference type="GO" id="GO:0008879">
    <property type="term" value="F:glucose-1-phosphate thymidylyltransferase activity"/>
    <property type="evidence" value="ECO:0007669"/>
    <property type="project" value="UniProtKB-EC"/>
</dbReference>
<dbReference type="GO" id="GO:0046872">
    <property type="term" value="F:metal ion binding"/>
    <property type="evidence" value="ECO:0007669"/>
    <property type="project" value="UniProtKB-KW"/>
</dbReference>
<dbReference type="GO" id="GO:0009246">
    <property type="term" value="P:enterobacterial common antigen biosynthetic process"/>
    <property type="evidence" value="ECO:0007669"/>
    <property type="project" value="UniProtKB-UniPathway"/>
</dbReference>
<dbReference type="CDD" id="cd02538">
    <property type="entry name" value="G1P_TT_short"/>
    <property type="match status" value="1"/>
</dbReference>
<dbReference type="FunFam" id="3.90.550.10:FF:000023">
    <property type="entry name" value="Glucose-1-phosphate thymidylyltransferase"/>
    <property type="match status" value="1"/>
</dbReference>
<dbReference type="Gene3D" id="3.90.550.10">
    <property type="entry name" value="Spore Coat Polysaccharide Biosynthesis Protein SpsA, Chain A"/>
    <property type="match status" value="1"/>
</dbReference>
<dbReference type="InterPro" id="IPR005907">
    <property type="entry name" value="G1P_thy_trans_s"/>
</dbReference>
<dbReference type="InterPro" id="IPR005835">
    <property type="entry name" value="NTP_transferase_dom"/>
</dbReference>
<dbReference type="InterPro" id="IPR029044">
    <property type="entry name" value="Nucleotide-diphossugar_trans"/>
</dbReference>
<dbReference type="NCBIfam" id="TIGR01207">
    <property type="entry name" value="rmlA"/>
    <property type="match status" value="1"/>
</dbReference>
<dbReference type="PANTHER" id="PTHR43532">
    <property type="entry name" value="GLUCOSE-1-PHOSPHATE THYMIDYLYLTRANSFERASE"/>
    <property type="match status" value="1"/>
</dbReference>
<dbReference type="PANTHER" id="PTHR43532:SF4">
    <property type="entry name" value="GLUCOSE-1-PHOSPHATE THYMIDYLYLTRANSFERASE 2"/>
    <property type="match status" value="1"/>
</dbReference>
<dbReference type="Pfam" id="PF00483">
    <property type="entry name" value="NTP_transferase"/>
    <property type="match status" value="1"/>
</dbReference>
<dbReference type="SUPFAM" id="SSF53448">
    <property type="entry name" value="Nucleotide-diphospho-sugar transferases"/>
    <property type="match status" value="1"/>
</dbReference>
<sequence length="293" mass="32734">MKGIILAGGSGTRLHPITRGVSKQLLPIYDKPMIYYPLSVLMLAGIREILIITTPEDKGYFQRLLGDGSEFGIQLEYAEQPSPDGLAQAFIIGETFLNGEPSCLVLGDNIFFGQGFSPKLRHVAARTEGATVFGYQVMDPERFGVVEFDDNFRAISLEEKPKQPKSNWAVTGLYFYDSKVVEYAKQVKPSERGELEITSINQMYLEAGNLTVELLGRGFAWLDTGTHDSLIEASTFVQTVEKRQGFKIACLEEIAWRNGWLDDEGVKRAASSLAKTGYGQYLLELLRARPRQY</sequence>
<keyword id="KW-0270">Exopolysaccharide synthesis</keyword>
<keyword id="KW-0460">Magnesium</keyword>
<keyword id="KW-0479">Metal-binding</keyword>
<keyword id="KW-0548">Nucleotidyltransferase</keyword>
<keyword id="KW-1185">Reference proteome</keyword>
<keyword id="KW-0808">Transferase</keyword>
<feature type="chain" id="PRO_0000208000" description="Glucose-1-phosphate thymidylyltransferase 2">
    <location>
        <begin position="1"/>
        <end position="293"/>
    </location>
</feature>
<feature type="binding site" evidence="1">
    <location>
        <position position="108"/>
    </location>
    <ligand>
        <name>Mg(2+)</name>
        <dbReference type="ChEBI" id="CHEBI:18420"/>
    </ligand>
</feature>
<feature type="binding site" evidence="1">
    <location>
        <position position="223"/>
    </location>
    <ligand>
        <name>Mg(2+)</name>
        <dbReference type="ChEBI" id="CHEBI:18420"/>
    </ligand>
</feature>
<organism>
    <name type="scientific">Shigella flexneri</name>
    <dbReference type="NCBI Taxonomy" id="623"/>
    <lineage>
        <taxon>Bacteria</taxon>
        <taxon>Pseudomonadati</taxon>
        <taxon>Pseudomonadota</taxon>
        <taxon>Gammaproteobacteria</taxon>
        <taxon>Enterobacterales</taxon>
        <taxon>Enterobacteriaceae</taxon>
        <taxon>Shigella</taxon>
    </lineage>
</organism>
<name>RMLA2_SHIFL</name>
<gene>
    <name type="primary">rffH</name>
    <name type="synonym">rmlA2</name>
    <name type="ordered locus">SF3863</name>
    <name type="ordered locus">S3897</name>
</gene>